<protein>
    <recommendedName>
        <fullName>Copper chaperone CopZ</fullName>
    </recommendedName>
</protein>
<sequence>MSQEILNVEGMSCGHCKSAVESALNNIDGVTSADVNLENGQVSVQYDDSKVAVSQMKDAIEDQGYDVV</sequence>
<dbReference type="EMBL" id="CP000703">
    <property type="protein sequence ID" value="ABQ50357.1"/>
    <property type="molecule type" value="Genomic_DNA"/>
</dbReference>
<dbReference type="RefSeq" id="WP_000076661.1">
    <property type="nucleotide sequence ID" value="NC_009487.1"/>
</dbReference>
<dbReference type="SMR" id="A5IVY4"/>
<dbReference type="KEGG" id="saj:SaurJH9_2580"/>
<dbReference type="HOGENOM" id="CLU_134973_10_4_9"/>
<dbReference type="GO" id="GO:0005737">
    <property type="term" value="C:cytoplasm"/>
    <property type="evidence" value="ECO:0007669"/>
    <property type="project" value="UniProtKB-SubCell"/>
</dbReference>
<dbReference type="GO" id="GO:0005507">
    <property type="term" value="F:copper ion binding"/>
    <property type="evidence" value="ECO:0007669"/>
    <property type="project" value="InterPro"/>
</dbReference>
<dbReference type="CDD" id="cd00371">
    <property type="entry name" value="HMA"/>
    <property type="match status" value="1"/>
</dbReference>
<dbReference type="FunFam" id="3.30.70.100:FF:000005">
    <property type="entry name" value="Copper-exporting P-type ATPase A"/>
    <property type="match status" value="1"/>
</dbReference>
<dbReference type="Gene3D" id="3.30.70.100">
    <property type="match status" value="1"/>
</dbReference>
<dbReference type="InterPro" id="IPR049740">
    <property type="entry name" value="CopZ"/>
</dbReference>
<dbReference type="InterPro" id="IPR017969">
    <property type="entry name" value="Heavy-metal-associated_CS"/>
</dbReference>
<dbReference type="InterPro" id="IPR006122">
    <property type="entry name" value="HMA_Cu_ion-bd"/>
</dbReference>
<dbReference type="InterPro" id="IPR006121">
    <property type="entry name" value="HMA_dom"/>
</dbReference>
<dbReference type="InterPro" id="IPR036163">
    <property type="entry name" value="HMA_dom_sf"/>
</dbReference>
<dbReference type="InterPro" id="IPR001802">
    <property type="entry name" value="MerP/CopZ"/>
</dbReference>
<dbReference type="NCBIfam" id="NF033795">
    <property type="entry name" value="chaper_CopZ_Bs"/>
    <property type="match status" value="1"/>
</dbReference>
<dbReference type="NCBIfam" id="TIGR00003">
    <property type="entry name" value="copper ion binding protein"/>
    <property type="match status" value="1"/>
</dbReference>
<dbReference type="PANTHER" id="PTHR46594">
    <property type="entry name" value="P-TYPE CATION-TRANSPORTING ATPASE"/>
    <property type="match status" value="1"/>
</dbReference>
<dbReference type="PANTHER" id="PTHR46594:SF4">
    <property type="entry name" value="P-TYPE CATION-TRANSPORTING ATPASE"/>
    <property type="match status" value="1"/>
</dbReference>
<dbReference type="Pfam" id="PF00403">
    <property type="entry name" value="HMA"/>
    <property type="match status" value="1"/>
</dbReference>
<dbReference type="PRINTS" id="PR00946">
    <property type="entry name" value="HGSCAVENGER"/>
</dbReference>
<dbReference type="SUPFAM" id="SSF55008">
    <property type="entry name" value="HMA, heavy metal-associated domain"/>
    <property type="match status" value="1"/>
</dbReference>
<dbReference type="PROSITE" id="PS01047">
    <property type="entry name" value="HMA_1"/>
    <property type="match status" value="1"/>
</dbReference>
<dbReference type="PROSITE" id="PS50846">
    <property type="entry name" value="HMA_2"/>
    <property type="match status" value="1"/>
</dbReference>
<comment type="function">
    <text evidence="1">Chaperone that serves for the intracellular sequestration and transport of Cu(+). Delivers Cu(+) to the copper-exporting P-type ATPase A (CopA) (By similarity).</text>
</comment>
<comment type="subcellular location">
    <subcellularLocation>
        <location evidence="1">Cytoplasm</location>
    </subcellularLocation>
</comment>
<keyword id="KW-0143">Chaperone</keyword>
<keyword id="KW-0186">Copper</keyword>
<keyword id="KW-0963">Cytoplasm</keyword>
<keyword id="KW-0479">Metal-binding</keyword>
<proteinExistence type="inferred from homology"/>
<organism>
    <name type="scientific">Staphylococcus aureus (strain JH9)</name>
    <dbReference type="NCBI Taxonomy" id="359786"/>
    <lineage>
        <taxon>Bacteria</taxon>
        <taxon>Bacillati</taxon>
        <taxon>Bacillota</taxon>
        <taxon>Bacilli</taxon>
        <taxon>Bacillales</taxon>
        <taxon>Staphylococcaceae</taxon>
        <taxon>Staphylococcus</taxon>
    </lineage>
</organism>
<feature type="chain" id="PRO_0000351273" description="Copper chaperone CopZ">
    <location>
        <begin position="1"/>
        <end position="68"/>
    </location>
</feature>
<feature type="domain" description="HMA" evidence="2">
    <location>
        <begin position="2"/>
        <end position="68"/>
    </location>
</feature>
<feature type="binding site" evidence="2">
    <location>
        <position position="13"/>
    </location>
    <ligand>
        <name>Cu cation</name>
        <dbReference type="ChEBI" id="CHEBI:23378"/>
    </ligand>
</feature>
<feature type="binding site" evidence="2">
    <location>
        <position position="16"/>
    </location>
    <ligand>
        <name>Cu cation</name>
        <dbReference type="ChEBI" id="CHEBI:23378"/>
    </ligand>
</feature>
<name>COPZ_STAA9</name>
<evidence type="ECO:0000250" key="1"/>
<evidence type="ECO:0000255" key="2">
    <source>
        <dbReference type="PROSITE-ProRule" id="PRU00280"/>
    </source>
</evidence>
<accession>A5IVY4</accession>
<reference key="1">
    <citation type="submission" date="2007-05" db="EMBL/GenBank/DDBJ databases">
        <title>Complete sequence of chromosome of Staphylococcus aureus subsp. aureus JH9.</title>
        <authorList>
            <consortium name="US DOE Joint Genome Institute"/>
            <person name="Copeland A."/>
            <person name="Lucas S."/>
            <person name="Lapidus A."/>
            <person name="Barry K."/>
            <person name="Detter J.C."/>
            <person name="Glavina del Rio T."/>
            <person name="Hammon N."/>
            <person name="Israni S."/>
            <person name="Pitluck S."/>
            <person name="Chain P."/>
            <person name="Malfatti S."/>
            <person name="Shin M."/>
            <person name="Vergez L."/>
            <person name="Schmutz J."/>
            <person name="Larimer F."/>
            <person name="Land M."/>
            <person name="Hauser L."/>
            <person name="Kyrpides N."/>
            <person name="Kim E."/>
            <person name="Tomasz A."/>
            <person name="Richardson P."/>
        </authorList>
    </citation>
    <scope>NUCLEOTIDE SEQUENCE [LARGE SCALE GENOMIC DNA]</scope>
    <source>
        <strain>JH9</strain>
    </source>
</reference>
<gene>
    <name type="primary">copZ</name>
    <name type="ordered locus">SaurJH9_2580</name>
</gene>